<feature type="chain" id="PRO_0000399336" description="Adenylosuccinate synthetase">
    <location>
        <begin position="1"/>
        <end position="424"/>
    </location>
</feature>
<feature type="active site" description="Proton acceptor" evidence="2">
    <location>
        <position position="13"/>
    </location>
</feature>
<feature type="active site" description="Proton donor" evidence="2">
    <location>
        <position position="41"/>
    </location>
</feature>
<feature type="binding site" evidence="2">
    <location>
        <begin position="12"/>
        <end position="18"/>
    </location>
    <ligand>
        <name>GTP</name>
        <dbReference type="ChEBI" id="CHEBI:37565"/>
    </ligand>
</feature>
<feature type="binding site" description="in other chain" evidence="2">
    <location>
        <begin position="13"/>
        <end position="16"/>
    </location>
    <ligand>
        <name>IMP</name>
        <dbReference type="ChEBI" id="CHEBI:58053"/>
        <note>ligand shared between dimeric partners</note>
    </ligand>
</feature>
<feature type="binding site" evidence="2">
    <location>
        <position position="13"/>
    </location>
    <ligand>
        <name>Mg(2+)</name>
        <dbReference type="ChEBI" id="CHEBI:18420"/>
    </ligand>
</feature>
<feature type="binding site" description="in other chain" evidence="2">
    <location>
        <begin position="38"/>
        <end position="41"/>
    </location>
    <ligand>
        <name>IMP</name>
        <dbReference type="ChEBI" id="CHEBI:58053"/>
        <note>ligand shared between dimeric partners</note>
    </ligand>
</feature>
<feature type="binding site" evidence="2">
    <location>
        <begin position="40"/>
        <end position="42"/>
    </location>
    <ligand>
        <name>GTP</name>
        <dbReference type="ChEBI" id="CHEBI:37565"/>
    </ligand>
</feature>
<feature type="binding site" evidence="2">
    <location>
        <position position="40"/>
    </location>
    <ligand>
        <name>Mg(2+)</name>
        <dbReference type="ChEBI" id="CHEBI:18420"/>
    </ligand>
</feature>
<feature type="binding site" description="in other chain" evidence="2">
    <location>
        <position position="130"/>
    </location>
    <ligand>
        <name>IMP</name>
        <dbReference type="ChEBI" id="CHEBI:58053"/>
        <note>ligand shared between dimeric partners</note>
    </ligand>
</feature>
<feature type="binding site" evidence="2">
    <location>
        <position position="144"/>
    </location>
    <ligand>
        <name>IMP</name>
        <dbReference type="ChEBI" id="CHEBI:58053"/>
        <note>ligand shared between dimeric partners</note>
    </ligand>
</feature>
<feature type="binding site" description="in other chain" evidence="2">
    <location>
        <position position="220"/>
    </location>
    <ligand>
        <name>IMP</name>
        <dbReference type="ChEBI" id="CHEBI:58053"/>
        <note>ligand shared between dimeric partners</note>
    </ligand>
</feature>
<feature type="binding site" description="in other chain" evidence="2">
    <location>
        <position position="235"/>
    </location>
    <ligand>
        <name>IMP</name>
        <dbReference type="ChEBI" id="CHEBI:58053"/>
        <note>ligand shared between dimeric partners</note>
    </ligand>
</feature>
<feature type="binding site" evidence="2">
    <location>
        <begin position="295"/>
        <end position="301"/>
    </location>
    <ligand>
        <name>substrate</name>
    </ligand>
</feature>
<feature type="binding site" description="in other chain" evidence="2">
    <location>
        <position position="299"/>
    </location>
    <ligand>
        <name>IMP</name>
        <dbReference type="ChEBI" id="CHEBI:58053"/>
        <note>ligand shared between dimeric partners</note>
    </ligand>
</feature>
<feature type="binding site" evidence="2">
    <location>
        <position position="301"/>
    </location>
    <ligand>
        <name>GTP</name>
        <dbReference type="ChEBI" id="CHEBI:37565"/>
    </ligand>
</feature>
<feature type="binding site" evidence="2">
    <location>
        <begin position="327"/>
        <end position="329"/>
    </location>
    <ligand>
        <name>GTP</name>
        <dbReference type="ChEBI" id="CHEBI:37565"/>
    </ligand>
</feature>
<feature type="binding site" evidence="2">
    <location>
        <begin position="412"/>
        <end position="414"/>
    </location>
    <ligand>
        <name>GTP</name>
        <dbReference type="ChEBI" id="CHEBI:37565"/>
    </ligand>
</feature>
<feature type="sequence conflict" description="In Ref. 1; AAL56637." evidence="3" ref="1">
    <original>S</original>
    <variation>P</variation>
    <location>
        <position position="212"/>
    </location>
</feature>
<keyword id="KW-0963">Cytoplasm</keyword>
<keyword id="KW-0342">GTP-binding</keyword>
<keyword id="KW-0436">Ligase</keyword>
<keyword id="KW-0460">Magnesium</keyword>
<keyword id="KW-0479">Metal-binding</keyword>
<keyword id="KW-0547">Nucleotide-binding</keyword>
<keyword id="KW-0658">Purine biosynthesis</keyword>
<keyword id="KW-1185">Reference proteome</keyword>
<evidence type="ECO:0000250" key="1"/>
<evidence type="ECO:0000255" key="2">
    <source>
        <dbReference type="HAMAP-Rule" id="MF_03125"/>
    </source>
</evidence>
<evidence type="ECO:0000305" key="3"/>
<proteinExistence type="inferred from homology"/>
<name>PURA_EMENI</name>
<protein>
    <recommendedName>
        <fullName evidence="2">Adenylosuccinate synthetase</fullName>
        <shortName evidence="2">AMPSase</shortName>
        <shortName evidence="2">AdSS</shortName>
        <ecNumber evidence="2">6.3.4.4</ecNumber>
    </recommendedName>
    <alternativeName>
        <fullName evidence="2">IMP--aspartate ligase</fullName>
    </alternativeName>
</protein>
<gene>
    <name type="primary">adB</name>
    <name type="synonym">oxpA</name>
    <name type="ORF">AN0893</name>
</gene>
<comment type="function">
    <text evidence="1">Plays an important role in the de novo pathway and in the salvage pathway of purine nucleotide biosynthesis. Catalyzes the first committed step in the biosynthesis of AMP from IMP (By similarity).</text>
</comment>
<comment type="catalytic activity">
    <reaction evidence="2">
        <text>IMP + L-aspartate + GTP = N(6)-(1,2-dicarboxyethyl)-AMP + GDP + phosphate + 2 H(+)</text>
        <dbReference type="Rhea" id="RHEA:15753"/>
        <dbReference type="ChEBI" id="CHEBI:15378"/>
        <dbReference type="ChEBI" id="CHEBI:29991"/>
        <dbReference type="ChEBI" id="CHEBI:37565"/>
        <dbReference type="ChEBI" id="CHEBI:43474"/>
        <dbReference type="ChEBI" id="CHEBI:57567"/>
        <dbReference type="ChEBI" id="CHEBI:58053"/>
        <dbReference type="ChEBI" id="CHEBI:58189"/>
        <dbReference type="EC" id="6.3.4.4"/>
    </reaction>
</comment>
<comment type="cofactor">
    <cofactor evidence="2">
        <name>Mg(2+)</name>
        <dbReference type="ChEBI" id="CHEBI:18420"/>
    </cofactor>
    <text evidence="2">Binds 1 Mg(2+) ion per subunit.</text>
</comment>
<comment type="pathway">
    <text evidence="2">Purine metabolism; AMP biosynthesis via de novo pathway; AMP from IMP: step 1/2.</text>
</comment>
<comment type="subunit">
    <text evidence="2">Homodimer.</text>
</comment>
<comment type="subcellular location">
    <subcellularLocation>
        <location evidence="2">Cytoplasm</location>
    </subcellularLocation>
</comment>
<comment type="similarity">
    <text evidence="2">Belongs to the adenylosuccinate synthetase family.</text>
</comment>
<accession>Q5BEY7</accession>
<accession>C8VUT0</accession>
<accession>Q8X1T5</accession>
<sequence length="424" mass="46396">MAVTIVLGSQWGDEGKGKITDMLSQEATLCCRAAGGHNAGHTIVHGNVTYDFHILPSGLVSDKCINLIGAGTVVHVPSFFKELAALEAKGLKGAAARAFISDRAHVCFDLHSVVDGLEEKGLGGRKVGTTGKGIGPCYSDKASRRGVRVGEILDEEVFERKLRTLHAGYTARFGQLDYDVEEEIARFKEYRKLLVPHIVDQLAFFNKHKDSSNTLVEGANALLLDLDHGTYPFVTSSSTGLGGAVQALHLNPTSIKSIIGVVKAYTTRVGSGPFPSEQLNEAGEKLQKVGREFGVTTGRKRRCGWFDLVLLRYSQSINHYTALNLTKLDILDDFDEIKVAVAYTLPDGTRLENTIPADAEVLNKVDVEYVTLPGWKSNTMGVKKYEDLPENARKYIEYIERELGGVPVKWIGTGPARDDMICRE</sequence>
<organism>
    <name type="scientific">Emericella nidulans (strain FGSC A4 / ATCC 38163 / CBS 112.46 / NRRL 194 / M139)</name>
    <name type="common">Aspergillus nidulans</name>
    <dbReference type="NCBI Taxonomy" id="227321"/>
    <lineage>
        <taxon>Eukaryota</taxon>
        <taxon>Fungi</taxon>
        <taxon>Dikarya</taxon>
        <taxon>Ascomycota</taxon>
        <taxon>Pezizomycotina</taxon>
        <taxon>Eurotiomycetes</taxon>
        <taxon>Eurotiomycetidae</taxon>
        <taxon>Eurotiales</taxon>
        <taxon>Aspergillaceae</taxon>
        <taxon>Aspergillus</taxon>
        <taxon>Aspergillus subgen. Nidulantes</taxon>
    </lineage>
</organism>
<reference key="1">
    <citation type="journal article" date="2001" name="Mol. Genet. Genomics">
        <title>The oxpA5 mutation of Aspergillus nidulans is an allele of adB, the gene encoding adenylosuccinate synthetase.</title>
        <authorList>
            <person name="Ribard C."/>
            <person name="Scazzocchio C."/>
            <person name="Oestreicher N."/>
        </authorList>
    </citation>
    <scope>NUCLEOTIDE SEQUENCE [GENOMIC DNA]</scope>
</reference>
<reference key="2">
    <citation type="journal article" date="2005" name="Nature">
        <title>Sequencing of Aspergillus nidulans and comparative analysis with A. fumigatus and A. oryzae.</title>
        <authorList>
            <person name="Galagan J.E."/>
            <person name="Calvo S.E."/>
            <person name="Cuomo C."/>
            <person name="Ma L.-J."/>
            <person name="Wortman J.R."/>
            <person name="Batzoglou S."/>
            <person name="Lee S.-I."/>
            <person name="Bastuerkmen M."/>
            <person name="Spevak C.C."/>
            <person name="Clutterbuck J."/>
            <person name="Kapitonov V."/>
            <person name="Jurka J."/>
            <person name="Scazzocchio C."/>
            <person name="Farman M.L."/>
            <person name="Butler J."/>
            <person name="Purcell S."/>
            <person name="Harris S."/>
            <person name="Braus G.H."/>
            <person name="Draht O."/>
            <person name="Busch S."/>
            <person name="D'Enfert C."/>
            <person name="Bouchier C."/>
            <person name="Goldman G.H."/>
            <person name="Bell-Pedersen D."/>
            <person name="Griffiths-Jones S."/>
            <person name="Doonan J.H."/>
            <person name="Yu J."/>
            <person name="Vienken K."/>
            <person name="Pain A."/>
            <person name="Freitag M."/>
            <person name="Selker E.U."/>
            <person name="Archer D.B."/>
            <person name="Penalva M.A."/>
            <person name="Oakley B.R."/>
            <person name="Momany M."/>
            <person name="Tanaka T."/>
            <person name="Kumagai T."/>
            <person name="Asai K."/>
            <person name="Machida M."/>
            <person name="Nierman W.C."/>
            <person name="Denning D.W."/>
            <person name="Caddick M.X."/>
            <person name="Hynes M."/>
            <person name="Paoletti M."/>
            <person name="Fischer R."/>
            <person name="Miller B.L."/>
            <person name="Dyer P.S."/>
            <person name="Sachs M.S."/>
            <person name="Osmani S.A."/>
            <person name="Birren B.W."/>
        </authorList>
    </citation>
    <scope>NUCLEOTIDE SEQUENCE [LARGE SCALE GENOMIC DNA]</scope>
    <source>
        <strain>FGSC A4 / ATCC 38163 / CBS 112.46 / NRRL 194 / M139</strain>
    </source>
</reference>
<reference key="3">
    <citation type="journal article" date="2009" name="Fungal Genet. Biol.">
        <title>The 2008 update of the Aspergillus nidulans genome annotation: a community effort.</title>
        <authorList>
            <person name="Wortman J.R."/>
            <person name="Gilsenan J.M."/>
            <person name="Joardar V."/>
            <person name="Deegan J."/>
            <person name="Clutterbuck J."/>
            <person name="Andersen M.R."/>
            <person name="Archer D."/>
            <person name="Bencina M."/>
            <person name="Braus G."/>
            <person name="Coutinho P."/>
            <person name="von Dohren H."/>
            <person name="Doonan J."/>
            <person name="Driessen A.J."/>
            <person name="Durek P."/>
            <person name="Espeso E."/>
            <person name="Fekete E."/>
            <person name="Flipphi M."/>
            <person name="Estrada C.G."/>
            <person name="Geysens S."/>
            <person name="Goldman G."/>
            <person name="de Groot P.W."/>
            <person name="Hansen K."/>
            <person name="Harris S.D."/>
            <person name="Heinekamp T."/>
            <person name="Helmstaedt K."/>
            <person name="Henrissat B."/>
            <person name="Hofmann G."/>
            <person name="Homan T."/>
            <person name="Horio T."/>
            <person name="Horiuchi H."/>
            <person name="James S."/>
            <person name="Jones M."/>
            <person name="Karaffa L."/>
            <person name="Karanyi Z."/>
            <person name="Kato M."/>
            <person name="Keller N."/>
            <person name="Kelly D.E."/>
            <person name="Kiel J.A."/>
            <person name="Kim J.M."/>
            <person name="van der Klei I.J."/>
            <person name="Klis F.M."/>
            <person name="Kovalchuk A."/>
            <person name="Krasevec N."/>
            <person name="Kubicek C.P."/>
            <person name="Liu B."/>
            <person name="Maccabe A."/>
            <person name="Meyer V."/>
            <person name="Mirabito P."/>
            <person name="Miskei M."/>
            <person name="Mos M."/>
            <person name="Mullins J."/>
            <person name="Nelson D.R."/>
            <person name="Nielsen J."/>
            <person name="Oakley B.R."/>
            <person name="Osmani S.A."/>
            <person name="Pakula T."/>
            <person name="Paszewski A."/>
            <person name="Paulsen I."/>
            <person name="Pilsyk S."/>
            <person name="Pocsi I."/>
            <person name="Punt P.J."/>
            <person name="Ram A.F."/>
            <person name="Ren Q."/>
            <person name="Robellet X."/>
            <person name="Robson G."/>
            <person name="Seiboth B."/>
            <person name="van Solingen P."/>
            <person name="Specht T."/>
            <person name="Sun J."/>
            <person name="Taheri-Talesh N."/>
            <person name="Takeshita N."/>
            <person name="Ussery D."/>
            <person name="vanKuyk P.A."/>
            <person name="Visser H."/>
            <person name="van de Vondervoort P.J."/>
            <person name="de Vries R.P."/>
            <person name="Walton J."/>
            <person name="Xiang X."/>
            <person name="Xiong Y."/>
            <person name="Zeng A.P."/>
            <person name="Brandt B.W."/>
            <person name="Cornell M.J."/>
            <person name="van den Hondel C.A."/>
            <person name="Visser J."/>
            <person name="Oliver S.G."/>
            <person name="Turner G."/>
        </authorList>
    </citation>
    <scope>GENOME REANNOTATION</scope>
    <source>
        <strain>FGSC A4 / ATCC 38163 / CBS 112.46 / NRRL 194 / M139</strain>
    </source>
</reference>
<dbReference type="EC" id="6.3.4.4" evidence="2"/>
<dbReference type="EMBL" id="AF123461">
    <property type="protein sequence ID" value="AAL56637.1"/>
    <property type="molecule type" value="Genomic_DNA"/>
</dbReference>
<dbReference type="EMBL" id="AACD01000014">
    <property type="protein sequence ID" value="EAA65922.1"/>
    <property type="molecule type" value="Genomic_DNA"/>
</dbReference>
<dbReference type="EMBL" id="BN001308">
    <property type="protein sequence ID" value="CBF88577.1"/>
    <property type="molecule type" value="Genomic_DNA"/>
</dbReference>
<dbReference type="RefSeq" id="XP_658497.1">
    <property type="nucleotide sequence ID" value="XM_653405.1"/>
</dbReference>
<dbReference type="SMR" id="Q5BEY7"/>
<dbReference type="FunCoup" id="Q5BEY7">
    <property type="interactions" value="803"/>
</dbReference>
<dbReference type="STRING" id="227321.Q5BEY7"/>
<dbReference type="EnsemblFungi" id="CBF88577">
    <property type="protein sequence ID" value="CBF88577"/>
    <property type="gene ID" value="ANIA_00893"/>
</dbReference>
<dbReference type="KEGG" id="ani:ANIA_00893"/>
<dbReference type="VEuPathDB" id="FungiDB:AN0893"/>
<dbReference type="eggNOG" id="KOG1355">
    <property type="taxonomic scope" value="Eukaryota"/>
</dbReference>
<dbReference type="HOGENOM" id="CLU_029848_3_2_1"/>
<dbReference type="InParanoid" id="Q5BEY7"/>
<dbReference type="OMA" id="FHHAKPI"/>
<dbReference type="OrthoDB" id="10265645at2759"/>
<dbReference type="UniPathway" id="UPA00075">
    <property type="reaction ID" value="UER00335"/>
</dbReference>
<dbReference type="Proteomes" id="UP000000560">
    <property type="component" value="Chromosome VIII"/>
</dbReference>
<dbReference type="GO" id="GO:0005737">
    <property type="term" value="C:cytoplasm"/>
    <property type="evidence" value="ECO:0000318"/>
    <property type="project" value="GO_Central"/>
</dbReference>
<dbReference type="GO" id="GO:0004019">
    <property type="term" value="F:adenylosuccinate synthase activity"/>
    <property type="evidence" value="ECO:0000318"/>
    <property type="project" value="GO_Central"/>
</dbReference>
<dbReference type="GO" id="GO:0016208">
    <property type="term" value="F:AMP binding"/>
    <property type="evidence" value="ECO:0007669"/>
    <property type="project" value="EnsemblFungi"/>
</dbReference>
<dbReference type="GO" id="GO:0019002">
    <property type="term" value="F:GMP binding"/>
    <property type="evidence" value="ECO:0007669"/>
    <property type="project" value="EnsemblFungi"/>
</dbReference>
<dbReference type="GO" id="GO:0005525">
    <property type="term" value="F:GTP binding"/>
    <property type="evidence" value="ECO:0007669"/>
    <property type="project" value="UniProtKB-UniRule"/>
</dbReference>
<dbReference type="GO" id="GO:0000287">
    <property type="term" value="F:magnesium ion binding"/>
    <property type="evidence" value="ECO:0007669"/>
    <property type="project" value="UniProtKB-UniRule"/>
</dbReference>
<dbReference type="GO" id="GO:0044208">
    <property type="term" value="P:'de novo' AMP biosynthetic process"/>
    <property type="evidence" value="ECO:0000318"/>
    <property type="project" value="GO_Central"/>
</dbReference>
<dbReference type="GO" id="GO:0071276">
    <property type="term" value="P:cellular response to cadmium ion"/>
    <property type="evidence" value="ECO:0007669"/>
    <property type="project" value="EnsemblFungi"/>
</dbReference>
<dbReference type="GO" id="GO:0046040">
    <property type="term" value="P:IMP metabolic process"/>
    <property type="evidence" value="ECO:0000318"/>
    <property type="project" value="GO_Central"/>
</dbReference>
<dbReference type="CDD" id="cd03108">
    <property type="entry name" value="AdSS"/>
    <property type="match status" value="1"/>
</dbReference>
<dbReference type="FunFam" id="1.10.300.10:FF:000001">
    <property type="entry name" value="Adenylosuccinate synthetase"/>
    <property type="match status" value="1"/>
</dbReference>
<dbReference type="FunFam" id="3.90.170.10:FF:000001">
    <property type="entry name" value="Adenylosuccinate synthetase"/>
    <property type="match status" value="1"/>
</dbReference>
<dbReference type="Gene3D" id="3.40.440.10">
    <property type="entry name" value="Adenylosuccinate Synthetase, subunit A, domain 1"/>
    <property type="match status" value="1"/>
</dbReference>
<dbReference type="Gene3D" id="1.10.300.10">
    <property type="entry name" value="Adenylosuccinate Synthetase, subunit A, domain 2"/>
    <property type="match status" value="1"/>
</dbReference>
<dbReference type="Gene3D" id="3.90.170.10">
    <property type="entry name" value="Adenylosuccinate Synthetase, subunit A, domain 3"/>
    <property type="match status" value="1"/>
</dbReference>
<dbReference type="HAMAP" id="MF_00011">
    <property type="entry name" value="Adenylosucc_synth"/>
    <property type="match status" value="1"/>
</dbReference>
<dbReference type="InterPro" id="IPR018220">
    <property type="entry name" value="Adenylosuccin_syn_GTP-bd"/>
</dbReference>
<dbReference type="InterPro" id="IPR033128">
    <property type="entry name" value="Adenylosuccin_syn_Lys_AS"/>
</dbReference>
<dbReference type="InterPro" id="IPR042109">
    <property type="entry name" value="Adenylosuccinate_synth_dom1"/>
</dbReference>
<dbReference type="InterPro" id="IPR042110">
    <property type="entry name" value="Adenylosuccinate_synth_dom2"/>
</dbReference>
<dbReference type="InterPro" id="IPR042111">
    <property type="entry name" value="Adenylosuccinate_synth_dom3"/>
</dbReference>
<dbReference type="InterPro" id="IPR001114">
    <property type="entry name" value="Adenylosuccinate_synthetase"/>
</dbReference>
<dbReference type="InterPro" id="IPR027417">
    <property type="entry name" value="P-loop_NTPase"/>
</dbReference>
<dbReference type="NCBIfam" id="NF002223">
    <property type="entry name" value="PRK01117.1"/>
    <property type="match status" value="1"/>
</dbReference>
<dbReference type="NCBIfam" id="TIGR00184">
    <property type="entry name" value="purA"/>
    <property type="match status" value="1"/>
</dbReference>
<dbReference type="PANTHER" id="PTHR11846">
    <property type="entry name" value="ADENYLOSUCCINATE SYNTHETASE"/>
    <property type="match status" value="1"/>
</dbReference>
<dbReference type="PANTHER" id="PTHR11846:SF0">
    <property type="entry name" value="ADENYLOSUCCINATE SYNTHETASE"/>
    <property type="match status" value="1"/>
</dbReference>
<dbReference type="Pfam" id="PF00709">
    <property type="entry name" value="Adenylsucc_synt"/>
    <property type="match status" value="1"/>
</dbReference>
<dbReference type="SMART" id="SM00788">
    <property type="entry name" value="Adenylsucc_synt"/>
    <property type="match status" value="1"/>
</dbReference>
<dbReference type="SUPFAM" id="SSF52540">
    <property type="entry name" value="P-loop containing nucleoside triphosphate hydrolases"/>
    <property type="match status" value="1"/>
</dbReference>
<dbReference type="PROSITE" id="PS01266">
    <property type="entry name" value="ADENYLOSUCCIN_SYN_1"/>
    <property type="match status" value="1"/>
</dbReference>
<dbReference type="PROSITE" id="PS00513">
    <property type="entry name" value="ADENYLOSUCCIN_SYN_2"/>
    <property type="match status" value="1"/>
</dbReference>